<sequence length="445" mass="47547">MSNRKYFGTDGIRGRVGDAPITPDFVLKLGWAAGKVLARHGSRKIIIGKDTRISGYMLESALEAGLAAAGLSALFTGPMPTPAVAYLTRTFRAEAGIVISASHNPFYDNGIKFFSIDGTKLPDAVEEAIEAEMEKEISCVDSAELGKASRIVDAAGRYIEFCKATFPNELSLSELKIVVDCANGATYHIAPNVLRELGANVIAIGCEPNGVNINAEVGATDVRALQARVLAEKADLGIAFDGDGDRVIMVDHEGNKVDGDQIMYIIAREGLRQGQLRGGAVGTLMSNMGLELALKQLGIPFARAKVGDRYVLEKMQEKGWRIGAENSGHVILLDKTTTGDGIVAGLQVLAAMARNHMSLHDLCSGMKMFPQILVNVRYTAGSGDPLEHESVKAVTAEVETALGSRGRVLLRKSGTEPLIRVMVEGEDEAQVTEFAHRIADAVKAV</sequence>
<reference key="1">
    <citation type="journal article" date="2001" name="Nature">
        <title>Genome sequence of enterohaemorrhagic Escherichia coli O157:H7.</title>
        <authorList>
            <person name="Perna N.T."/>
            <person name="Plunkett G. III"/>
            <person name="Burland V."/>
            <person name="Mau B."/>
            <person name="Glasner J.D."/>
            <person name="Rose D.J."/>
            <person name="Mayhew G.F."/>
            <person name="Evans P.S."/>
            <person name="Gregor J."/>
            <person name="Kirkpatrick H.A."/>
            <person name="Posfai G."/>
            <person name="Hackett J."/>
            <person name="Klink S."/>
            <person name="Boutin A."/>
            <person name="Shao Y."/>
            <person name="Miller L."/>
            <person name="Grotbeck E.J."/>
            <person name="Davis N.W."/>
            <person name="Lim A."/>
            <person name="Dimalanta E.T."/>
            <person name="Potamousis K."/>
            <person name="Apodaca J."/>
            <person name="Anantharaman T.S."/>
            <person name="Lin J."/>
            <person name="Yen G."/>
            <person name="Schwartz D.C."/>
            <person name="Welch R.A."/>
            <person name="Blattner F.R."/>
        </authorList>
    </citation>
    <scope>NUCLEOTIDE SEQUENCE [LARGE SCALE GENOMIC DNA]</scope>
    <source>
        <strain>O157:H7 / EDL933 / ATCC 700927 / EHEC</strain>
    </source>
</reference>
<reference key="2">
    <citation type="journal article" date="2001" name="DNA Res.">
        <title>Complete genome sequence of enterohemorrhagic Escherichia coli O157:H7 and genomic comparison with a laboratory strain K-12.</title>
        <authorList>
            <person name="Hayashi T."/>
            <person name="Makino K."/>
            <person name="Ohnishi M."/>
            <person name="Kurokawa K."/>
            <person name="Ishii K."/>
            <person name="Yokoyama K."/>
            <person name="Han C.-G."/>
            <person name="Ohtsubo E."/>
            <person name="Nakayama K."/>
            <person name="Murata T."/>
            <person name="Tanaka M."/>
            <person name="Tobe T."/>
            <person name="Iida T."/>
            <person name="Takami H."/>
            <person name="Honda T."/>
            <person name="Sasakawa C."/>
            <person name="Ogasawara N."/>
            <person name="Yasunaga T."/>
            <person name="Kuhara S."/>
            <person name="Shiba T."/>
            <person name="Hattori M."/>
            <person name="Shinagawa H."/>
        </authorList>
    </citation>
    <scope>NUCLEOTIDE SEQUENCE [LARGE SCALE GENOMIC DNA]</scope>
    <source>
        <strain>O157:H7 / Sakai / RIMD 0509952 / EHEC</strain>
    </source>
</reference>
<organism>
    <name type="scientific">Escherichia coli O157:H7</name>
    <dbReference type="NCBI Taxonomy" id="83334"/>
    <lineage>
        <taxon>Bacteria</taxon>
        <taxon>Pseudomonadati</taxon>
        <taxon>Pseudomonadota</taxon>
        <taxon>Gammaproteobacteria</taxon>
        <taxon>Enterobacterales</taxon>
        <taxon>Enterobacteriaceae</taxon>
        <taxon>Escherichia</taxon>
    </lineage>
</organism>
<gene>
    <name evidence="1" type="primary">glmM</name>
    <name type="ordered locus">Z4538</name>
    <name type="ordered locus">ECs4055</name>
</gene>
<proteinExistence type="inferred from homology"/>
<protein>
    <recommendedName>
        <fullName evidence="1">Phosphoglucosamine mutase</fullName>
        <ecNumber evidence="1">5.4.2.10</ecNumber>
    </recommendedName>
</protein>
<comment type="function">
    <text evidence="1">Catalyzes the conversion of glucosamine-6-phosphate to glucosamine-1-phosphate.</text>
</comment>
<comment type="catalytic activity">
    <reaction evidence="1">
        <text>alpha-D-glucosamine 1-phosphate = D-glucosamine 6-phosphate</text>
        <dbReference type="Rhea" id="RHEA:23424"/>
        <dbReference type="ChEBI" id="CHEBI:58516"/>
        <dbReference type="ChEBI" id="CHEBI:58725"/>
        <dbReference type="EC" id="5.4.2.10"/>
    </reaction>
</comment>
<comment type="cofactor">
    <cofactor evidence="1">
        <name>Mg(2+)</name>
        <dbReference type="ChEBI" id="CHEBI:18420"/>
    </cofactor>
    <text evidence="1">Binds 1 Mg(2+) ion per subunit.</text>
</comment>
<comment type="PTM">
    <text evidence="1">Activated by phosphorylation.</text>
</comment>
<comment type="similarity">
    <text evidence="1">Belongs to the phosphohexose mutase family.</text>
</comment>
<feature type="chain" id="PRO_0000147888" description="Phosphoglucosamine mutase">
    <location>
        <begin position="1"/>
        <end position="445"/>
    </location>
</feature>
<feature type="active site" description="Phosphoserine intermediate" evidence="1">
    <location>
        <position position="102"/>
    </location>
</feature>
<feature type="binding site" description="via phosphate group" evidence="1">
    <location>
        <position position="102"/>
    </location>
    <ligand>
        <name>Mg(2+)</name>
        <dbReference type="ChEBI" id="CHEBI:18420"/>
    </ligand>
</feature>
<feature type="binding site" evidence="1">
    <location>
        <position position="241"/>
    </location>
    <ligand>
        <name>Mg(2+)</name>
        <dbReference type="ChEBI" id="CHEBI:18420"/>
    </ligand>
</feature>
<feature type="binding site" evidence="1">
    <location>
        <position position="243"/>
    </location>
    <ligand>
        <name>Mg(2+)</name>
        <dbReference type="ChEBI" id="CHEBI:18420"/>
    </ligand>
</feature>
<feature type="binding site" evidence="1">
    <location>
        <position position="245"/>
    </location>
    <ligand>
        <name>Mg(2+)</name>
        <dbReference type="ChEBI" id="CHEBI:18420"/>
    </ligand>
</feature>
<feature type="modified residue" description="Phosphoserine" evidence="1">
    <location>
        <position position="102"/>
    </location>
</feature>
<keyword id="KW-0413">Isomerase</keyword>
<keyword id="KW-0460">Magnesium</keyword>
<keyword id="KW-0479">Metal-binding</keyword>
<keyword id="KW-0597">Phosphoprotein</keyword>
<keyword id="KW-1185">Reference proteome</keyword>
<name>GLMM_ECO57</name>
<evidence type="ECO:0000255" key="1">
    <source>
        <dbReference type="HAMAP-Rule" id="MF_01554"/>
    </source>
</evidence>
<dbReference type="EC" id="5.4.2.10" evidence="1"/>
<dbReference type="EMBL" id="AE005174">
    <property type="protein sequence ID" value="AAG58310.1"/>
    <property type="molecule type" value="Genomic_DNA"/>
</dbReference>
<dbReference type="EMBL" id="BA000007">
    <property type="protein sequence ID" value="BAB37478.1"/>
    <property type="molecule type" value="Genomic_DNA"/>
</dbReference>
<dbReference type="PIR" id="B85981">
    <property type="entry name" value="B85981"/>
</dbReference>
<dbReference type="PIR" id="G91135">
    <property type="entry name" value="G91135"/>
</dbReference>
<dbReference type="RefSeq" id="NP_312082.1">
    <property type="nucleotide sequence ID" value="NC_002695.1"/>
</dbReference>
<dbReference type="RefSeq" id="WP_000071140.1">
    <property type="nucleotide sequence ID" value="NZ_VOAI01000014.1"/>
</dbReference>
<dbReference type="SMR" id="Q8X9L2"/>
<dbReference type="STRING" id="155864.Z4538"/>
<dbReference type="GeneID" id="916104"/>
<dbReference type="KEGG" id="ece:Z4538"/>
<dbReference type="KEGG" id="ecs:ECs_4055"/>
<dbReference type="PATRIC" id="fig|386585.9.peg.4234"/>
<dbReference type="eggNOG" id="COG1109">
    <property type="taxonomic scope" value="Bacteria"/>
</dbReference>
<dbReference type="HOGENOM" id="CLU_016950_7_0_6"/>
<dbReference type="OMA" id="SHNAMPD"/>
<dbReference type="Proteomes" id="UP000000558">
    <property type="component" value="Chromosome"/>
</dbReference>
<dbReference type="Proteomes" id="UP000002519">
    <property type="component" value="Chromosome"/>
</dbReference>
<dbReference type="GO" id="GO:0005829">
    <property type="term" value="C:cytosol"/>
    <property type="evidence" value="ECO:0007669"/>
    <property type="project" value="TreeGrafter"/>
</dbReference>
<dbReference type="GO" id="GO:0000287">
    <property type="term" value="F:magnesium ion binding"/>
    <property type="evidence" value="ECO:0007669"/>
    <property type="project" value="UniProtKB-UniRule"/>
</dbReference>
<dbReference type="GO" id="GO:0008966">
    <property type="term" value="F:phosphoglucosamine mutase activity"/>
    <property type="evidence" value="ECO:0007669"/>
    <property type="project" value="UniProtKB-UniRule"/>
</dbReference>
<dbReference type="GO" id="GO:0004615">
    <property type="term" value="F:phosphomannomutase activity"/>
    <property type="evidence" value="ECO:0007669"/>
    <property type="project" value="TreeGrafter"/>
</dbReference>
<dbReference type="GO" id="GO:0005975">
    <property type="term" value="P:carbohydrate metabolic process"/>
    <property type="evidence" value="ECO:0007669"/>
    <property type="project" value="InterPro"/>
</dbReference>
<dbReference type="GO" id="GO:0009252">
    <property type="term" value="P:peptidoglycan biosynthetic process"/>
    <property type="evidence" value="ECO:0007669"/>
    <property type="project" value="TreeGrafter"/>
</dbReference>
<dbReference type="GO" id="GO:0006048">
    <property type="term" value="P:UDP-N-acetylglucosamine biosynthetic process"/>
    <property type="evidence" value="ECO:0007669"/>
    <property type="project" value="TreeGrafter"/>
</dbReference>
<dbReference type="CDD" id="cd05802">
    <property type="entry name" value="GlmM"/>
    <property type="match status" value="1"/>
</dbReference>
<dbReference type="FunFam" id="3.30.310.50:FF:000001">
    <property type="entry name" value="Phosphoglucosamine mutase"/>
    <property type="match status" value="1"/>
</dbReference>
<dbReference type="FunFam" id="3.40.120.10:FF:000001">
    <property type="entry name" value="Phosphoglucosamine mutase"/>
    <property type="match status" value="1"/>
</dbReference>
<dbReference type="FunFam" id="3.40.120.10:FF:000002">
    <property type="entry name" value="Phosphoglucosamine mutase"/>
    <property type="match status" value="1"/>
</dbReference>
<dbReference type="Gene3D" id="3.40.120.10">
    <property type="entry name" value="Alpha-D-Glucose-1,6-Bisphosphate, subunit A, domain 3"/>
    <property type="match status" value="3"/>
</dbReference>
<dbReference type="Gene3D" id="3.30.310.50">
    <property type="entry name" value="Alpha-D-phosphohexomutase, C-terminal domain"/>
    <property type="match status" value="1"/>
</dbReference>
<dbReference type="HAMAP" id="MF_01554_B">
    <property type="entry name" value="GlmM_B"/>
    <property type="match status" value="1"/>
</dbReference>
<dbReference type="InterPro" id="IPR005844">
    <property type="entry name" value="A-D-PHexomutase_a/b/a-I"/>
</dbReference>
<dbReference type="InterPro" id="IPR016055">
    <property type="entry name" value="A-D-PHexomutase_a/b/a-I/II/III"/>
</dbReference>
<dbReference type="InterPro" id="IPR005845">
    <property type="entry name" value="A-D-PHexomutase_a/b/a-II"/>
</dbReference>
<dbReference type="InterPro" id="IPR005846">
    <property type="entry name" value="A-D-PHexomutase_a/b/a-III"/>
</dbReference>
<dbReference type="InterPro" id="IPR005843">
    <property type="entry name" value="A-D-PHexomutase_C"/>
</dbReference>
<dbReference type="InterPro" id="IPR036900">
    <property type="entry name" value="A-D-PHexomutase_C_sf"/>
</dbReference>
<dbReference type="InterPro" id="IPR016066">
    <property type="entry name" value="A-D-PHexomutase_CS"/>
</dbReference>
<dbReference type="InterPro" id="IPR005841">
    <property type="entry name" value="Alpha-D-phosphohexomutase_SF"/>
</dbReference>
<dbReference type="InterPro" id="IPR006352">
    <property type="entry name" value="GlmM_bact"/>
</dbReference>
<dbReference type="InterPro" id="IPR050060">
    <property type="entry name" value="Phosphoglucosamine_mutase"/>
</dbReference>
<dbReference type="NCBIfam" id="TIGR01455">
    <property type="entry name" value="glmM"/>
    <property type="match status" value="1"/>
</dbReference>
<dbReference type="NCBIfam" id="NF008139">
    <property type="entry name" value="PRK10887.1"/>
    <property type="match status" value="1"/>
</dbReference>
<dbReference type="PANTHER" id="PTHR42946:SF1">
    <property type="entry name" value="PHOSPHOGLUCOMUTASE (ALPHA-D-GLUCOSE-1,6-BISPHOSPHATE-DEPENDENT)"/>
    <property type="match status" value="1"/>
</dbReference>
<dbReference type="PANTHER" id="PTHR42946">
    <property type="entry name" value="PHOSPHOHEXOSE MUTASE"/>
    <property type="match status" value="1"/>
</dbReference>
<dbReference type="Pfam" id="PF02878">
    <property type="entry name" value="PGM_PMM_I"/>
    <property type="match status" value="1"/>
</dbReference>
<dbReference type="Pfam" id="PF02879">
    <property type="entry name" value="PGM_PMM_II"/>
    <property type="match status" value="1"/>
</dbReference>
<dbReference type="Pfam" id="PF02880">
    <property type="entry name" value="PGM_PMM_III"/>
    <property type="match status" value="1"/>
</dbReference>
<dbReference type="Pfam" id="PF00408">
    <property type="entry name" value="PGM_PMM_IV"/>
    <property type="match status" value="1"/>
</dbReference>
<dbReference type="PRINTS" id="PR00509">
    <property type="entry name" value="PGMPMM"/>
</dbReference>
<dbReference type="SUPFAM" id="SSF55957">
    <property type="entry name" value="Phosphoglucomutase, C-terminal domain"/>
    <property type="match status" value="1"/>
</dbReference>
<dbReference type="SUPFAM" id="SSF53738">
    <property type="entry name" value="Phosphoglucomutase, first 3 domains"/>
    <property type="match status" value="3"/>
</dbReference>
<dbReference type="PROSITE" id="PS00710">
    <property type="entry name" value="PGM_PMM"/>
    <property type="match status" value="1"/>
</dbReference>
<accession>Q8X9L2</accession>
<accession>Q7AAI2</accession>